<gene>
    <name type="primary">aac</name>
    <name type="synonym">acp</name>
    <name type="ORF">B22K18.180</name>
    <name type="ORF">NCU09477</name>
</gene>
<sequence>MAEQQKVLGMPPFVADFLMGGVSAAVSKTAAAPIERIKLLVQNQDEMIRAGRLDRRYNGIIDCFKRTTADEGVMALWRGNTANVIRYFPTQALNFAFRDKFKKMFGYKKDVDGYWKWMAGNLASGGAAGATSLLFVYSLDYARTRLANDAKSAKKGGERQFNGLVDVYRKTIASDGIAGLYRGFGPSVAGIVVYRGLYFGLYDSIKPVLLVGDLKNNFLASFALGWCVTTAAGIASYPLDTIRRRMMMTSGEAVKYKSSFDAASQIVAKEGVKSLFKGAGANILRGVAGAGVLSIYDQLQVLLFGKAFKGGSG</sequence>
<comment type="function">
    <text evidence="1">ADP:ATP antiporter that mediates import of ADP into the mitochondrial matrix for ATP synthesis, and export of ATP out to fuel the cell. Cycles between the cytoplasmic-open state (c-state) and the matrix-open state (m-state): operates by the alternating access mechanism with a single substrate-binding site intermittently exposed to either the cytosolic (c-state) or matrix (m-state) side of the inner mitochondrial membrane.</text>
</comment>
<comment type="catalytic activity">
    <reaction evidence="1">
        <text>ADP(in) + ATP(out) = ADP(out) + ATP(in)</text>
        <dbReference type="Rhea" id="RHEA:34999"/>
        <dbReference type="ChEBI" id="CHEBI:30616"/>
        <dbReference type="ChEBI" id="CHEBI:456216"/>
    </reaction>
    <physiologicalReaction direction="left-to-right" evidence="1">
        <dbReference type="Rhea" id="RHEA:35000"/>
    </physiologicalReaction>
</comment>
<comment type="activity regulation">
    <text evidence="1">The matrix-open state (m-state) is inhibited by the membrane-permeable bongkrekic acid (BKA). The cytoplasmic-open state (c-state) is inhibited by the membrane-impermeable toxic inhibitor carboxyatractyloside (CATR).</text>
</comment>
<comment type="subunit">
    <text evidence="1">Monomer.</text>
</comment>
<comment type="subcellular location">
    <subcellularLocation>
        <location evidence="4">Mitochondrion inner membrane</location>
        <topology evidence="1">Multi-pass membrane protein</topology>
    </subcellularLocation>
</comment>
<comment type="domain">
    <text evidence="1">The transmembrane helices are not perpendicular to the plane of the membrane, but cross the membrane at an angle. Odd-numbered transmembrane helices exhibit a sharp kink, due to the presence of a conserved proline residue.</text>
</comment>
<comment type="similarity">
    <text evidence="5">Belongs to the mitochondrial carrier (TC 2.A.29) family.</text>
</comment>
<keyword id="KW-0050">Antiport</keyword>
<keyword id="KW-0472">Membrane</keyword>
<keyword id="KW-0496">Mitochondrion</keyword>
<keyword id="KW-0999">Mitochondrion inner membrane</keyword>
<keyword id="KW-1185">Reference proteome</keyword>
<keyword id="KW-0677">Repeat</keyword>
<keyword id="KW-0812">Transmembrane</keyword>
<keyword id="KW-1133">Transmembrane helix</keyword>
<keyword id="KW-0813">Transport</keyword>
<organism>
    <name type="scientific">Neurospora crassa (strain ATCC 24698 / 74-OR23-1A / CBS 708.71 / DSM 1257 / FGSC 987)</name>
    <dbReference type="NCBI Taxonomy" id="367110"/>
    <lineage>
        <taxon>Eukaryota</taxon>
        <taxon>Fungi</taxon>
        <taxon>Dikarya</taxon>
        <taxon>Ascomycota</taxon>
        <taxon>Pezizomycotina</taxon>
        <taxon>Sordariomycetes</taxon>
        <taxon>Sordariomycetidae</taxon>
        <taxon>Sordariales</taxon>
        <taxon>Sordariaceae</taxon>
        <taxon>Neurospora</taxon>
    </lineage>
</organism>
<evidence type="ECO:0000250" key="1">
    <source>
        <dbReference type="UniProtKB" id="G2QNH0"/>
    </source>
</evidence>
<evidence type="ECO:0000250" key="2">
    <source>
        <dbReference type="UniProtKB" id="P02722"/>
    </source>
</evidence>
<evidence type="ECO:0000250" key="3">
    <source>
        <dbReference type="UniProtKB" id="P12235"/>
    </source>
</evidence>
<evidence type="ECO:0000250" key="4">
    <source>
        <dbReference type="UniProtKB" id="P18239"/>
    </source>
</evidence>
<evidence type="ECO:0000305" key="5"/>
<protein>
    <recommendedName>
        <fullName>ADP,ATP carrier protein</fullName>
    </recommendedName>
    <alternativeName>
        <fullName>ADP/ATP translocase</fullName>
    </alternativeName>
    <alternativeName>
        <fullName>Adenine nucleotide translocator</fullName>
        <shortName>ANT</shortName>
    </alternativeName>
</protein>
<proteinExistence type="inferred from homology"/>
<reference key="1">
    <citation type="journal article" date="1984" name="EMBO J.">
        <title>Nucleotide sequence of the cloned mRNA and gene of the ADP/ATP carrier from Neurospora crassa.</title>
        <authorList>
            <person name="Arends H."/>
            <person name="Sebald W."/>
        </authorList>
    </citation>
    <scope>NUCLEOTIDE SEQUENCE</scope>
</reference>
<reference key="2">
    <citation type="journal article" date="2003" name="Nucleic Acids Res.">
        <title>What's in the genome of a filamentous fungus? Analysis of the Neurospora genome sequence.</title>
        <authorList>
            <person name="Mannhaupt G."/>
            <person name="Montrone C."/>
            <person name="Haase D."/>
            <person name="Mewes H.-W."/>
            <person name="Aign V."/>
            <person name="Hoheisel J.D."/>
            <person name="Fartmann B."/>
            <person name="Nyakatura G."/>
            <person name="Kempken F."/>
            <person name="Maier J."/>
            <person name="Schulte U."/>
        </authorList>
    </citation>
    <scope>NUCLEOTIDE SEQUENCE [LARGE SCALE GENOMIC DNA]</scope>
    <source>
        <strain>ATCC 24698 / 74-OR23-1A / CBS 708.71 / DSM 1257 / FGSC 987</strain>
    </source>
</reference>
<reference key="3">
    <citation type="journal article" date="2003" name="Nature">
        <title>The genome sequence of the filamentous fungus Neurospora crassa.</title>
        <authorList>
            <person name="Galagan J.E."/>
            <person name="Calvo S.E."/>
            <person name="Borkovich K.A."/>
            <person name="Selker E.U."/>
            <person name="Read N.D."/>
            <person name="Jaffe D.B."/>
            <person name="FitzHugh W."/>
            <person name="Ma L.-J."/>
            <person name="Smirnov S."/>
            <person name="Purcell S."/>
            <person name="Rehman B."/>
            <person name="Elkins T."/>
            <person name="Engels R."/>
            <person name="Wang S."/>
            <person name="Nielsen C.B."/>
            <person name="Butler J."/>
            <person name="Endrizzi M."/>
            <person name="Qui D."/>
            <person name="Ianakiev P."/>
            <person name="Bell-Pedersen D."/>
            <person name="Nelson M.A."/>
            <person name="Werner-Washburne M."/>
            <person name="Selitrennikoff C.P."/>
            <person name="Kinsey J.A."/>
            <person name="Braun E.L."/>
            <person name="Zelter A."/>
            <person name="Schulte U."/>
            <person name="Kothe G.O."/>
            <person name="Jedd G."/>
            <person name="Mewes H.-W."/>
            <person name="Staben C."/>
            <person name="Marcotte E."/>
            <person name="Greenberg D."/>
            <person name="Roy A."/>
            <person name="Foley K."/>
            <person name="Naylor J."/>
            <person name="Stange-Thomann N."/>
            <person name="Barrett R."/>
            <person name="Gnerre S."/>
            <person name="Kamal M."/>
            <person name="Kamvysselis M."/>
            <person name="Mauceli E.W."/>
            <person name="Bielke C."/>
            <person name="Rudd S."/>
            <person name="Frishman D."/>
            <person name="Krystofova S."/>
            <person name="Rasmussen C."/>
            <person name="Metzenberg R.L."/>
            <person name="Perkins D.D."/>
            <person name="Kroken S."/>
            <person name="Cogoni C."/>
            <person name="Macino G."/>
            <person name="Catcheside D.E.A."/>
            <person name="Li W."/>
            <person name="Pratt R.J."/>
            <person name="Osmani S.A."/>
            <person name="DeSouza C.P.C."/>
            <person name="Glass N.L."/>
            <person name="Orbach M.J."/>
            <person name="Berglund J.A."/>
            <person name="Voelker R."/>
            <person name="Yarden O."/>
            <person name="Plamann M."/>
            <person name="Seiler S."/>
            <person name="Dunlap J.C."/>
            <person name="Radford A."/>
            <person name="Aramayo R."/>
            <person name="Natvig D.O."/>
            <person name="Alex L.A."/>
            <person name="Mannhaupt G."/>
            <person name="Ebbole D.J."/>
            <person name="Freitag M."/>
            <person name="Paulsen I."/>
            <person name="Sachs M.S."/>
            <person name="Lander E.S."/>
            <person name="Nusbaum C."/>
            <person name="Birren B.W."/>
        </authorList>
    </citation>
    <scope>NUCLEOTIDE SEQUENCE [LARGE SCALE GENOMIC DNA]</scope>
    <source>
        <strain>ATCC 24698 / 74-OR23-1A / CBS 708.71 / DSM 1257 / FGSC 987</strain>
    </source>
</reference>
<dbReference type="EMBL" id="X00363">
    <property type="protein sequence ID" value="CAA25104.1"/>
    <property type="molecule type" value="Transcribed_RNA"/>
</dbReference>
<dbReference type="EMBL" id="BX842597">
    <property type="protein sequence ID" value="CAE75740.1"/>
    <property type="molecule type" value="Genomic_DNA"/>
</dbReference>
<dbReference type="EMBL" id="CM002237">
    <property type="protein sequence ID" value="ESA43737.1"/>
    <property type="molecule type" value="Genomic_DNA"/>
</dbReference>
<dbReference type="PIR" id="A03182">
    <property type="entry name" value="XWNC"/>
</dbReference>
<dbReference type="RefSeq" id="XP_011393638.1">
    <property type="nucleotide sequence ID" value="XM_011395336.1"/>
</dbReference>
<dbReference type="SMR" id="P02723"/>
<dbReference type="FunCoup" id="P02723">
    <property type="interactions" value="920"/>
</dbReference>
<dbReference type="STRING" id="367110.P02723"/>
<dbReference type="PaxDb" id="5141-EFNCRP00000009289"/>
<dbReference type="EnsemblFungi" id="ESA43737">
    <property type="protein sequence ID" value="ESA43737"/>
    <property type="gene ID" value="NCU09477"/>
</dbReference>
<dbReference type="GeneID" id="3879355"/>
<dbReference type="KEGG" id="ncr:NCU09477"/>
<dbReference type="VEuPathDB" id="FungiDB:NCU09477"/>
<dbReference type="HOGENOM" id="CLU_015166_12_0_1"/>
<dbReference type="InParanoid" id="P02723"/>
<dbReference type="OMA" id="CWATIYK"/>
<dbReference type="OrthoDB" id="270584at2759"/>
<dbReference type="Proteomes" id="UP000001805">
    <property type="component" value="Chromosome 6, Linkage Group II"/>
</dbReference>
<dbReference type="GO" id="GO:0005743">
    <property type="term" value="C:mitochondrial inner membrane"/>
    <property type="evidence" value="ECO:0007669"/>
    <property type="project" value="UniProtKB-SubCell"/>
</dbReference>
<dbReference type="GO" id="GO:0005471">
    <property type="term" value="F:ATP:ADP antiporter activity"/>
    <property type="evidence" value="ECO:0007669"/>
    <property type="project" value="EnsemblFungi"/>
</dbReference>
<dbReference type="GO" id="GO:0140021">
    <property type="term" value="P:mitochondrial ADP transmembrane transport"/>
    <property type="evidence" value="ECO:0007669"/>
    <property type="project" value="EnsemblFungi"/>
</dbReference>
<dbReference type="GO" id="GO:1990544">
    <property type="term" value="P:mitochondrial ATP transmembrane transport"/>
    <property type="evidence" value="ECO:0007669"/>
    <property type="project" value="EnsemblFungi"/>
</dbReference>
<dbReference type="FunFam" id="1.50.40.10:FF:000001">
    <property type="entry name" value="ADP,ATP carrier protein, mitochondrial"/>
    <property type="match status" value="1"/>
</dbReference>
<dbReference type="Gene3D" id="1.50.40.10">
    <property type="entry name" value="Mitochondrial carrier domain"/>
    <property type="match status" value="1"/>
</dbReference>
<dbReference type="InterPro" id="IPR002113">
    <property type="entry name" value="ADT_euk_type"/>
</dbReference>
<dbReference type="InterPro" id="IPR002067">
    <property type="entry name" value="Mit_carrier"/>
</dbReference>
<dbReference type="InterPro" id="IPR018108">
    <property type="entry name" value="Mitochondrial_sb/sol_carrier"/>
</dbReference>
<dbReference type="InterPro" id="IPR023395">
    <property type="entry name" value="Mt_carrier_dom_sf"/>
</dbReference>
<dbReference type="PANTHER" id="PTHR45635">
    <property type="entry name" value="ADP,ATP CARRIER PROTEIN 1-RELATED-RELATED"/>
    <property type="match status" value="1"/>
</dbReference>
<dbReference type="PANTHER" id="PTHR45635:SF14">
    <property type="entry name" value="ADP_ATP TRANSLOCASE"/>
    <property type="match status" value="1"/>
</dbReference>
<dbReference type="Pfam" id="PF00153">
    <property type="entry name" value="Mito_carr"/>
    <property type="match status" value="3"/>
</dbReference>
<dbReference type="PRINTS" id="PR00927">
    <property type="entry name" value="ADPTRNSLCASE"/>
</dbReference>
<dbReference type="PRINTS" id="PR00926">
    <property type="entry name" value="MITOCARRIER"/>
</dbReference>
<dbReference type="SUPFAM" id="SSF103506">
    <property type="entry name" value="Mitochondrial carrier"/>
    <property type="match status" value="1"/>
</dbReference>
<dbReference type="PROSITE" id="PS50920">
    <property type="entry name" value="SOLCAR"/>
    <property type="match status" value="3"/>
</dbReference>
<accession>P02723</accession>
<accession>Q7RVI0</accession>
<accession>V5INU6</accession>
<name>ADT_NEUCR</name>
<feature type="chain" id="PRO_0000090591" description="ADP,ATP carrier protein">
    <location>
        <begin position="1"/>
        <end position="313"/>
    </location>
</feature>
<feature type="transmembrane region" description="Helical; Name=1" evidence="4">
    <location>
        <begin position="13"/>
        <end position="40"/>
    </location>
</feature>
<feature type="transmembrane region" description="Helical; Name=2" evidence="4">
    <location>
        <begin position="81"/>
        <end position="105"/>
    </location>
</feature>
<feature type="transmembrane region" description="Helical; Name=3" evidence="4">
    <location>
        <begin position="114"/>
        <end position="134"/>
    </location>
</feature>
<feature type="transmembrane region" description="Helical; Name=4" evidence="4">
    <location>
        <begin position="184"/>
        <end position="205"/>
    </location>
</feature>
<feature type="transmembrane region" description="Helical; Name=5" evidence="4">
    <location>
        <begin position="219"/>
        <end position="239"/>
    </location>
</feature>
<feature type="transmembrane region" description="Helical; Name=6" evidence="4">
    <location>
        <begin position="279"/>
        <end position="299"/>
    </location>
</feature>
<feature type="repeat" description="Solcar 1">
    <location>
        <begin position="11"/>
        <end position="104"/>
    </location>
</feature>
<feature type="repeat" description="Solcar 2">
    <location>
        <begin position="116"/>
        <end position="208"/>
    </location>
</feature>
<feature type="repeat" description="Solcar 3">
    <location>
        <begin position="216"/>
        <end position="302"/>
    </location>
</feature>
<feature type="region of interest" description="Important for transport activity" evidence="3">
    <location>
        <begin position="243"/>
        <end position="248"/>
    </location>
</feature>
<feature type="short sequence motif" description="Nucleotide carrier signature motif" evidence="2">
    <location>
        <begin position="243"/>
        <end position="248"/>
    </location>
</feature>
<feature type="binding site" evidence="2">
    <location>
        <position position="86"/>
    </location>
    <ligand>
        <name>ADP</name>
        <dbReference type="ChEBI" id="CHEBI:456216"/>
    </ligand>
</feature>
<feature type="binding site" evidence="2">
    <location>
        <position position="98"/>
    </location>
    <ligand>
        <name>ADP</name>
        <dbReference type="ChEBI" id="CHEBI:456216"/>
    </ligand>
</feature>
<feature type="binding site" evidence="2">
    <location>
        <position position="243"/>
    </location>
    <ligand>
        <name>ADP</name>
        <dbReference type="ChEBI" id="CHEBI:456216"/>
    </ligand>
</feature>